<keyword id="KW-0687">Ribonucleoprotein</keyword>
<keyword id="KW-0689">Ribosomal protein</keyword>
<keyword id="KW-0694">RNA-binding</keyword>
<keyword id="KW-0699">rRNA-binding</keyword>
<name>RS5_NEOSM</name>
<protein>
    <recommendedName>
        <fullName evidence="1">Small ribosomal subunit protein uS5</fullName>
    </recommendedName>
    <alternativeName>
        <fullName evidence="2">30S ribosomal protein S5</fullName>
    </alternativeName>
</protein>
<dbReference type="EMBL" id="CP000237">
    <property type="protein sequence ID" value="ABD45885.1"/>
    <property type="molecule type" value="Genomic_DNA"/>
</dbReference>
<dbReference type="RefSeq" id="WP_011451680.1">
    <property type="nucleotide sequence ID" value="NC_007798.1"/>
</dbReference>
<dbReference type="SMR" id="Q2GEC2"/>
<dbReference type="STRING" id="222891.NSE_0283"/>
<dbReference type="KEGG" id="nse:NSE_0283"/>
<dbReference type="eggNOG" id="COG0098">
    <property type="taxonomic scope" value="Bacteria"/>
</dbReference>
<dbReference type="HOGENOM" id="CLU_065898_2_2_5"/>
<dbReference type="OrthoDB" id="9809045at2"/>
<dbReference type="Proteomes" id="UP000001942">
    <property type="component" value="Chromosome"/>
</dbReference>
<dbReference type="GO" id="GO:0015935">
    <property type="term" value="C:small ribosomal subunit"/>
    <property type="evidence" value="ECO:0007669"/>
    <property type="project" value="InterPro"/>
</dbReference>
<dbReference type="GO" id="GO:0019843">
    <property type="term" value="F:rRNA binding"/>
    <property type="evidence" value="ECO:0007669"/>
    <property type="project" value="UniProtKB-UniRule"/>
</dbReference>
<dbReference type="GO" id="GO:0003735">
    <property type="term" value="F:structural constituent of ribosome"/>
    <property type="evidence" value="ECO:0007669"/>
    <property type="project" value="InterPro"/>
</dbReference>
<dbReference type="GO" id="GO:0006412">
    <property type="term" value="P:translation"/>
    <property type="evidence" value="ECO:0007669"/>
    <property type="project" value="UniProtKB-UniRule"/>
</dbReference>
<dbReference type="FunFam" id="3.30.230.10:FF:000002">
    <property type="entry name" value="30S ribosomal protein S5"/>
    <property type="match status" value="1"/>
</dbReference>
<dbReference type="Gene3D" id="3.30.160.20">
    <property type="match status" value="1"/>
</dbReference>
<dbReference type="Gene3D" id="3.30.230.10">
    <property type="match status" value="1"/>
</dbReference>
<dbReference type="HAMAP" id="MF_01307_B">
    <property type="entry name" value="Ribosomal_uS5_B"/>
    <property type="match status" value="1"/>
</dbReference>
<dbReference type="InterPro" id="IPR020568">
    <property type="entry name" value="Ribosomal_Su5_D2-typ_SF"/>
</dbReference>
<dbReference type="InterPro" id="IPR000851">
    <property type="entry name" value="Ribosomal_uS5"/>
</dbReference>
<dbReference type="InterPro" id="IPR005712">
    <property type="entry name" value="Ribosomal_uS5_bac-type"/>
</dbReference>
<dbReference type="InterPro" id="IPR005324">
    <property type="entry name" value="Ribosomal_uS5_C"/>
</dbReference>
<dbReference type="InterPro" id="IPR013810">
    <property type="entry name" value="Ribosomal_uS5_N"/>
</dbReference>
<dbReference type="InterPro" id="IPR018192">
    <property type="entry name" value="Ribosomal_uS5_N_CS"/>
</dbReference>
<dbReference type="InterPro" id="IPR014721">
    <property type="entry name" value="Ribsml_uS5_D2-typ_fold_subgr"/>
</dbReference>
<dbReference type="NCBIfam" id="TIGR01021">
    <property type="entry name" value="rpsE_bact"/>
    <property type="match status" value="1"/>
</dbReference>
<dbReference type="PANTHER" id="PTHR48277">
    <property type="entry name" value="MITOCHONDRIAL RIBOSOMAL PROTEIN S5"/>
    <property type="match status" value="1"/>
</dbReference>
<dbReference type="PANTHER" id="PTHR48277:SF1">
    <property type="entry name" value="MITOCHONDRIAL RIBOSOMAL PROTEIN S5"/>
    <property type="match status" value="1"/>
</dbReference>
<dbReference type="Pfam" id="PF00333">
    <property type="entry name" value="Ribosomal_S5"/>
    <property type="match status" value="1"/>
</dbReference>
<dbReference type="Pfam" id="PF03719">
    <property type="entry name" value="Ribosomal_S5_C"/>
    <property type="match status" value="1"/>
</dbReference>
<dbReference type="SUPFAM" id="SSF54768">
    <property type="entry name" value="dsRNA-binding domain-like"/>
    <property type="match status" value="1"/>
</dbReference>
<dbReference type="SUPFAM" id="SSF54211">
    <property type="entry name" value="Ribosomal protein S5 domain 2-like"/>
    <property type="match status" value="1"/>
</dbReference>
<dbReference type="PROSITE" id="PS00585">
    <property type="entry name" value="RIBOSOMAL_S5"/>
    <property type="match status" value="1"/>
</dbReference>
<dbReference type="PROSITE" id="PS50881">
    <property type="entry name" value="S5_DSRBD"/>
    <property type="match status" value="1"/>
</dbReference>
<evidence type="ECO:0000255" key="1">
    <source>
        <dbReference type="HAMAP-Rule" id="MF_01307"/>
    </source>
</evidence>
<evidence type="ECO:0000305" key="2"/>
<feature type="chain" id="PRO_0000293200" description="Small ribosomal subunit protein uS5">
    <location>
        <begin position="1"/>
        <end position="172"/>
    </location>
</feature>
<feature type="domain" description="S5 DRBM" evidence="1">
    <location>
        <begin position="11"/>
        <end position="74"/>
    </location>
</feature>
<sequence>MKNVDHRNLDLFESVVDIARVSKVTKGGRQFSFRVAALVGDKKGCVGYATAKHDEVLDARSKAVRKAKGAMIRFPLREGRTIHHDCFSKLGASKLFIKPAPEGTGIVAGGAMRKFCEMLGVSDIIAKSYGSSTSGIVIRNAIKAFSLVCSPEYVAGKRNRKKSKFISKAVTQ</sequence>
<proteinExistence type="inferred from homology"/>
<reference key="1">
    <citation type="journal article" date="2006" name="PLoS Genet.">
        <title>Comparative genomics of emerging human ehrlichiosis agents.</title>
        <authorList>
            <person name="Dunning Hotopp J.C."/>
            <person name="Lin M."/>
            <person name="Madupu R."/>
            <person name="Crabtree J."/>
            <person name="Angiuoli S.V."/>
            <person name="Eisen J.A."/>
            <person name="Seshadri R."/>
            <person name="Ren Q."/>
            <person name="Wu M."/>
            <person name="Utterback T.R."/>
            <person name="Smith S."/>
            <person name="Lewis M."/>
            <person name="Khouri H."/>
            <person name="Zhang C."/>
            <person name="Niu H."/>
            <person name="Lin Q."/>
            <person name="Ohashi N."/>
            <person name="Zhi N."/>
            <person name="Nelson W.C."/>
            <person name="Brinkac L.M."/>
            <person name="Dodson R.J."/>
            <person name="Rosovitz M.J."/>
            <person name="Sundaram J.P."/>
            <person name="Daugherty S.C."/>
            <person name="Davidsen T."/>
            <person name="Durkin A.S."/>
            <person name="Gwinn M.L."/>
            <person name="Haft D.H."/>
            <person name="Selengut J.D."/>
            <person name="Sullivan S.A."/>
            <person name="Zafar N."/>
            <person name="Zhou L."/>
            <person name="Benahmed F."/>
            <person name="Forberger H."/>
            <person name="Halpin R."/>
            <person name="Mulligan S."/>
            <person name="Robinson J."/>
            <person name="White O."/>
            <person name="Rikihisa Y."/>
            <person name="Tettelin H."/>
        </authorList>
    </citation>
    <scope>NUCLEOTIDE SEQUENCE [LARGE SCALE GENOMIC DNA]</scope>
    <source>
        <strain>ATCC VR-367 / Miyayama</strain>
    </source>
</reference>
<accession>Q2GEC2</accession>
<gene>
    <name evidence="1" type="primary">rpsE</name>
    <name type="ordered locus">NSE_0283</name>
</gene>
<comment type="function">
    <text evidence="1">With S4 and S12 plays an important role in translational accuracy.</text>
</comment>
<comment type="function">
    <text evidence="1">Located at the back of the 30S subunit body where it stabilizes the conformation of the head with respect to the body.</text>
</comment>
<comment type="subunit">
    <text evidence="1">Part of the 30S ribosomal subunit. Contacts proteins S4 and S8.</text>
</comment>
<comment type="domain">
    <text>The N-terminal domain interacts with the head of the 30S subunit; the C-terminal domain interacts with the body and contacts protein S4. The interaction surface between S4 and S5 is involved in control of translational fidelity.</text>
</comment>
<comment type="similarity">
    <text evidence="1">Belongs to the universal ribosomal protein uS5 family.</text>
</comment>
<organism>
    <name type="scientific">Neorickettsia sennetsu (strain ATCC VR-367 / Miyayama)</name>
    <name type="common">Ehrlichia sennetsu</name>
    <dbReference type="NCBI Taxonomy" id="222891"/>
    <lineage>
        <taxon>Bacteria</taxon>
        <taxon>Pseudomonadati</taxon>
        <taxon>Pseudomonadota</taxon>
        <taxon>Alphaproteobacteria</taxon>
        <taxon>Rickettsiales</taxon>
        <taxon>Anaplasmataceae</taxon>
        <taxon>Neorickettsia</taxon>
    </lineage>
</organism>